<gene>
    <name evidence="1" type="primary">rplV</name>
    <name evidence="1" type="synonym">rpl22</name>
    <name type="ordered locus">SynRCC307_2121</name>
</gene>
<dbReference type="EMBL" id="CT978603">
    <property type="protein sequence ID" value="CAK29024.1"/>
    <property type="molecule type" value="Genomic_DNA"/>
</dbReference>
<dbReference type="SMR" id="A5GVW5"/>
<dbReference type="STRING" id="316278.SynRCC307_2121"/>
<dbReference type="KEGG" id="syr:SynRCC307_2121"/>
<dbReference type="eggNOG" id="COG0091">
    <property type="taxonomic scope" value="Bacteria"/>
</dbReference>
<dbReference type="HOGENOM" id="CLU_083987_3_3_3"/>
<dbReference type="OrthoDB" id="9805969at2"/>
<dbReference type="Proteomes" id="UP000001115">
    <property type="component" value="Chromosome"/>
</dbReference>
<dbReference type="GO" id="GO:0022625">
    <property type="term" value="C:cytosolic large ribosomal subunit"/>
    <property type="evidence" value="ECO:0007669"/>
    <property type="project" value="TreeGrafter"/>
</dbReference>
<dbReference type="GO" id="GO:0019843">
    <property type="term" value="F:rRNA binding"/>
    <property type="evidence" value="ECO:0007669"/>
    <property type="project" value="UniProtKB-UniRule"/>
</dbReference>
<dbReference type="GO" id="GO:0003735">
    <property type="term" value="F:structural constituent of ribosome"/>
    <property type="evidence" value="ECO:0007669"/>
    <property type="project" value="InterPro"/>
</dbReference>
<dbReference type="GO" id="GO:0006412">
    <property type="term" value="P:translation"/>
    <property type="evidence" value="ECO:0007669"/>
    <property type="project" value="UniProtKB-UniRule"/>
</dbReference>
<dbReference type="CDD" id="cd00336">
    <property type="entry name" value="Ribosomal_L22"/>
    <property type="match status" value="1"/>
</dbReference>
<dbReference type="Gene3D" id="3.90.470.10">
    <property type="entry name" value="Ribosomal protein L22/L17"/>
    <property type="match status" value="1"/>
</dbReference>
<dbReference type="HAMAP" id="MF_01331_B">
    <property type="entry name" value="Ribosomal_uL22_B"/>
    <property type="match status" value="1"/>
</dbReference>
<dbReference type="InterPro" id="IPR001063">
    <property type="entry name" value="Ribosomal_uL22"/>
</dbReference>
<dbReference type="InterPro" id="IPR005727">
    <property type="entry name" value="Ribosomal_uL22_bac/chlpt-type"/>
</dbReference>
<dbReference type="InterPro" id="IPR047867">
    <property type="entry name" value="Ribosomal_uL22_bac/org-type"/>
</dbReference>
<dbReference type="InterPro" id="IPR018260">
    <property type="entry name" value="Ribosomal_uL22_CS"/>
</dbReference>
<dbReference type="InterPro" id="IPR036394">
    <property type="entry name" value="Ribosomal_uL22_sf"/>
</dbReference>
<dbReference type="NCBIfam" id="TIGR01044">
    <property type="entry name" value="rplV_bact"/>
    <property type="match status" value="1"/>
</dbReference>
<dbReference type="PANTHER" id="PTHR13501">
    <property type="entry name" value="CHLOROPLAST 50S RIBOSOMAL PROTEIN L22-RELATED"/>
    <property type="match status" value="1"/>
</dbReference>
<dbReference type="PANTHER" id="PTHR13501:SF8">
    <property type="entry name" value="LARGE RIBOSOMAL SUBUNIT PROTEIN UL22M"/>
    <property type="match status" value="1"/>
</dbReference>
<dbReference type="Pfam" id="PF00237">
    <property type="entry name" value="Ribosomal_L22"/>
    <property type="match status" value="1"/>
</dbReference>
<dbReference type="SUPFAM" id="SSF54843">
    <property type="entry name" value="Ribosomal protein L22"/>
    <property type="match status" value="1"/>
</dbReference>
<dbReference type="PROSITE" id="PS00464">
    <property type="entry name" value="RIBOSOMAL_L22"/>
    <property type="match status" value="1"/>
</dbReference>
<reference key="1">
    <citation type="submission" date="2006-05" db="EMBL/GenBank/DDBJ databases">
        <authorList>
            <consortium name="Genoscope"/>
        </authorList>
    </citation>
    <scope>NUCLEOTIDE SEQUENCE [LARGE SCALE GENOMIC DNA]</scope>
    <source>
        <strain>RCC307</strain>
    </source>
</reference>
<keyword id="KW-1185">Reference proteome</keyword>
<keyword id="KW-0687">Ribonucleoprotein</keyword>
<keyword id="KW-0689">Ribosomal protein</keyword>
<keyword id="KW-0694">RNA-binding</keyword>
<keyword id="KW-0699">rRNA-binding</keyword>
<protein>
    <recommendedName>
        <fullName evidence="1">Large ribosomal subunit protein uL22</fullName>
    </recommendedName>
    <alternativeName>
        <fullName evidence="2">50S ribosomal protein L22</fullName>
    </alternativeName>
</protein>
<sequence length="118" mass="13016">MATTASPQALAHGRFVRGSVSKVRRVLDQIRGRSYRDALIMLEFMPYRSTGPITKVLRSAVANAEHNMGLDPSNLVVSMASADMGPTMKRYRPRAQGRAYQIKKQTCHISIGVTPQDA</sequence>
<name>RL22_SYNR3</name>
<organism>
    <name type="scientific">Synechococcus sp. (strain RCC307)</name>
    <dbReference type="NCBI Taxonomy" id="316278"/>
    <lineage>
        <taxon>Bacteria</taxon>
        <taxon>Bacillati</taxon>
        <taxon>Cyanobacteriota</taxon>
        <taxon>Cyanophyceae</taxon>
        <taxon>Synechococcales</taxon>
        <taxon>Synechococcaceae</taxon>
        <taxon>Synechococcus</taxon>
    </lineage>
</organism>
<proteinExistence type="inferred from homology"/>
<comment type="function">
    <text evidence="1">This protein binds specifically to 23S rRNA; its binding is stimulated by other ribosomal proteins, e.g. L4, L17, and L20. It is important during the early stages of 50S assembly. It makes multiple contacts with different domains of the 23S rRNA in the assembled 50S subunit and ribosome (By similarity).</text>
</comment>
<comment type="function">
    <text evidence="1">The globular domain of the protein is located near the polypeptide exit tunnel on the outside of the subunit, while an extended beta-hairpin is found that lines the wall of the exit tunnel in the center of the 70S ribosome.</text>
</comment>
<comment type="subunit">
    <text evidence="1">Part of the 50S ribosomal subunit.</text>
</comment>
<comment type="similarity">
    <text evidence="1">Belongs to the universal ribosomal protein uL22 family.</text>
</comment>
<accession>A5GVW5</accession>
<evidence type="ECO:0000255" key="1">
    <source>
        <dbReference type="HAMAP-Rule" id="MF_01331"/>
    </source>
</evidence>
<evidence type="ECO:0000305" key="2"/>
<feature type="chain" id="PRO_0000354525" description="Large ribosomal subunit protein uL22">
    <location>
        <begin position="1"/>
        <end position="118"/>
    </location>
</feature>